<name>YACG_ESCF3</name>
<proteinExistence type="inferred from homology"/>
<feature type="chain" id="PRO_1000130964" description="DNA gyrase inhibitor YacG">
    <location>
        <begin position="1"/>
        <end position="64"/>
    </location>
</feature>
<feature type="region of interest" description="Disordered" evidence="2">
    <location>
        <begin position="45"/>
        <end position="64"/>
    </location>
</feature>
<feature type="compositionally biased region" description="Acidic residues" evidence="2">
    <location>
        <begin position="54"/>
        <end position="64"/>
    </location>
</feature>
<feature type="binding site" evidence="1">
    <location>
        <position position="9"/>
    </location>
    <ligand>
        <name>Zn(2+)</name>
        <dbReference type="ChEBI" id="CHEBI:29105"/>
    </ligand>
</feature>
<feature type="binding site" evidence="1">
    <location>
        <position position="12"/>
    </location>
    <ligand>
        <name>Zn(2+)</name>
        <dbReference type="ChEBI" id="CHEBI:29105"/>
    </ligand>
</feature>
<feature type="binding site" evidence="1">
    <location>
        <position position="28"/>
    </location>
    <ligand>
        <name>Zn(2+)</name>
        <dbReference type="ChEBI" id="CHEBI:29105"/>
    </ligand>
</feature>
<feature type="binding site" evidence="1">
    <location>
        <position position="32"/>
    </location>
    <ligand>
        <name>Zn(2+)</name>
        <dbReference type="ChEBI" id="CHEBI:29105"/>
    </ligand>
</feature>
<comment type="function">
    <text evidence="1">Inhibits all the catalytic activities of DNA gyrase by preventing its interaction with DNA. Acts by binding directly to the C-terminal domain of GyrB, which probably disrupts DNA binding by the gyrase.</text>
</comment>
<comment type="cofactor">
    <cofactor evidence="1">
        <name>Zn(2+)</name>
        <dbReference type="ChEBI" id="CHEBI:29105"/>
    </cofactor>
    <text evidence="1">Binds 1 zinc ion.</text>
</comment>
<comment type="subunit">
    <text evidence="1">Interacts with GyrB.</text>
</comment>
<comment type="similarity">
    <text evidence="1">Belongs to the DNA gyrase inhibitor YacG family.</text>
</comment>
<organism>
    <name type="scientific">Escherichia fergusonii (strain ATCC 35469 / DSM 13698 / CCUG 18766 / IAM 14443 / JCM 21226 / LMG 7866 / NBRC 102419 / NCTC 12128 / CDC 0568-73)</name>
    <dbReference type="NCBI Taxonomy" id="585054"/>
    <lineage>
        <taxon>Bacteria</taxon>
        <taxon>Pseudomonadati</taxon>
        <taxon>Pseudomonadota</taxon>
        <taxon>Gammaproteobacteria</taxon>
        <taxon>Enterobacterales</taxon>
        <taxon>Enterobacteriaceae</taxon>
        <taxon>Escherichia</taxon>
    </lineage>
</organism>
<sequence length="64" mass="7178">MSETITVNCPTCGKTVVWGEISPFRPFCSKRCQLIDLGEWAAEEKRIPSSGDLSESDDWSEEPK</sequence>
<evidence type="ECO:0000255" key="1">
    <source>
        <dbReference type="HAMAP-Rule" id="MF_00649"/>
    </source>
</evidence>
<evidence type="ECO:0000256" key="2">
    <source>
        <dbReference type="SAM" id="MobiDB-lite"/>
    </source>
</evidence>
<reference key="1">
    <citation type="journal article" date="2009" name="PLoS Genet.">
        <title>Organised genome dynamics in the Escherichia coli species results in highly diverse adaptive paths.</title>
        <authorList>
            <person name="Touchon M."/>
            <person name="Hoede C."/>
            <person name="Tenaillon O."/>
            <person name="Barbe V."/>
            <person name="Baeriswyl S."/>
            <person name="Bidet P."/>
            <person name="Bingen E."/>
            <person name="Bonacorsi S."/>
            <person name="Bouchier C."/>
            <person name="Bouvet O."/>
            <person name="Calteau A."/>
            <person name="Chiapello H."/>
            <person name="Clermont O."/>
            <person name="Cruveiller S."/>
            <person name="Danchin A."/>
            <person name="Diard M."/>
            <person name="Dossat C."/>
            <person name="Karoui M.E."/>
            <person name="Frapy E."/>
            <person name="Garry L."/>
            <person name="Ghigo J.M."/>
            <person name="Gilles A.M."/>
            <person name="Johnson J."/>
            <person name="Le Bouguenec C."/>
            <person name="Lescat M."/>
            <person name="Mangenot S."/>
            <person name="Martinez-Jehanne V."/>
            <person name="Matic I."/>
            <person name="Nassif X."/>
            <person name="Oztas S."/>
            <person name="Petit M.A."/>
            <person name="Pichon C."/>
            <person name="Rouy Z."/>
            <person name="Ruf C.S."/>
            <person name="Schneider D."/>
            <person name="Tourret J."/>
            <person name="Vacherie B."/>
            <person name="Vallenet D."/>
            <person name="Medigue C."/>
            <person name="Rocha E.P.C."/>
            <person name="Denamur E."/>
        </authorList>
    </citation>
    <scope>NUCLEOTIDE SEQUENCE [LARGE SCALE GENOMIC DNA]</scope>
    <source>
        <strain>ATCC 35469 / DSM 13698 / BCRC 15582 / CCUG 18766 / IAM 14443 / JCM 21226 / LMG 7866 / NBRC 102419 / NCTC 12128 / CDC 0568-73</strain>
    </source>
</reference>
<gene>
    <name evidence="1" type="primary">yacG</name>
    <name type="ordered locus">EFER_0122</name>
</gene>
<accession>B7LWG6</accession>
<dbReference type="EMBL" id="CU928158">
    <property type="protein sequence ID" value="CAQ87705.1"/>
    <property type="molecule type" value="Genomic_DNA"/>
</dbReference>
<dbReference type="RefSeq" id="WP_000005041.1">
    <property type="nucleotide sequence ID" value="NC_011740.1"/>
</dbReference>
<dbReference type="SMR" id="B7LWG6"/>
<dbReference type="GeneID" id="75058792"/>
<dbReference type="KEGG" id="efe:EFER_0122"/>
<dbReference type="HOGENOM" id="CLU_178280_3_1_6"/>
<dbReference type="OrthoDB" id="9809663at2"/>
<dbReference type="Proteomes" id="UP000000745">
    <property type="component" value="Chromosome"/>
</dbReference>
<dbReference type="GO" id="GO:0008657">
    <property type="term" value="F:DNA topoisomerase type II (double strand cut, ATP-hydrolyzing) inhibitor activity"/>
    <property type="evidence" value="ECO:0007669"/>
    <property type="project" value="UniProtKB-UniRule"/>
</dbReference>
<dbReference type="GO" id="GO:0008270">
    <property type="term" value="F:zinc ion binding"/>
    <property type="evidence" value="ECO:0007669"/>
    <property type="project" value="UniProtKB-UniRule"/>
</dbReference>
<dbReference type="GO" id="GO:0006355">
    <property type="term" value="P:regulation of DNA-templated transcription"/>
    <property type="evidence" value="ECO:0007669"/>
    <property type="project" value="InterPro"/>
</dbReference>
<dbReference type="FunFam" id="3.30.50.10:FF:000026">
    <property type="entry name" value="DNA gyrase inhibitor YacG"/>
    <property type="match status" value="1"/>
</dbReference>
<dbReference type="Gene3D" id="3.30.50.10">
    <property type="entry name" value="Erythroid Transcription Factor GATA-1, subunit A"/>
    <property type="match status" value="1"/>
</dbReference>
<dbReference type="HAMAP" id="MF_00649">
    <property type="entry name" value="DNA_gyrase_inhibitor_YacG"/>
    <property type="match status" value="1"/>
</dbReference>
<dbReference type="InterPro" id="IPR005584">
    <property type="entry name" value="DNA_gyrase_inhibitor_YacG"/>
</dbReference>
<dbReference type="InterPro" id="IPR013088">
    <property type="entry name" value="Znf_NHR/GATA"/>
</dbReference>
<dbReference type="NCBIfam" id="NF001638">
    <property type="entry name" value="PRK00418.1"/>
    <property type="match status" value="1"/>
</dbReference>
<dbReference type="PANTHER" id="PTHR36150">
    <property type="entry name" value="DNA GYRASE INHIBITOR YACG"/>
    <property type="match status" value="1"/>
</dbReference>
<dbReference type="PANTHER" id="PTHR36150:SF1">
    <property type="entry name" value="DNA GYRASE INHIBITOR YACG"/>
    <property type="match status" value="1"/>
</dbReference>
<dbReference type="Pfam" id="PF03884">
    <property type="entry name" value="YacG"/>
    <property type="match status" value="1"/>
</dbReference>
<dbReference type="SUPFAM" id="SSF57716">
    <property type="entry name" value="Glucocorticoid receptor-like (DNA-binding domain)"/>
    <property type="match status" value="1"/>
</dbReference>
<keyword id="KW-0479">Metal-binding</keyword>
<keyword id="KW-0862">Zinc</keyword>
<protein>
    <recommendedName>
        <fullName evidence="1">DNA gyrase inhibitor YacG</fullName>
    </recommendedName>
</protein>